<proteinExistence type="inferred from homology"/>
<feature type="chain" id="PRO_0000228565" description="Ribonuclease 3">
    <location>
        <begin position="1"/>
        <end position="225"/>
    </location>
</feature>
<feature type="domain" description="RNase III" evidence="1">
    <location>
        <begin position="5"/>
        <end position="127"/>
    </location>
</feature>
<feature type="domain" description="DRBM" evidence="1">
    <location>
        <begin position="154"/>
        <end position="223"/>
    </location>
</feature>
<feature type="active site" evidence="1">
    <location>
        <position position="44"/>
    </location>
</feature>
<feature type="active site" evidence="1">
    <location>
        <position position="116"/>
    </location>
</feature>
<feature type="binding site" evidence="1">
    <location>
        <position position="40"/>
    </location>
    <ligand>
        <name>Mg(2+)</name>
        <dbReference type="ChEBI" id="CHEBI:18420"/>
    </ligand>
</feature>
<feature type="binding site" evidence="1">
    <location>
        <position position="113"/>
    </location>
    <ligand>
        <name>Mg(2+)</name>
        <dbReference type="ChEBI" id="CHEBI:18420"/>
    </ligand>
</feature>
<feature type="binding site" evidence="1">
    <location>
        <position position="116"/>
    </location>
    <ligand>
        <name>Mg(2+)</name>
        <dbReference type="ChEBI" id="CHEBI:18420"/>
    </ligand>
</feature>
<sequence length="225" mass="25072">MKKNVTELYKTIDYIFADQGLLEQAMTHRSHKGQHNERLEFLGDSILSFVIANALYAKFPKAREGDLSRMRSTLVRGQTLAEFGLEFGLGDYLRLGPGELKSGGFRRESTLADAVEAIIGAVFLDSDIERCGELILSWYEERLNAISPGLNQKDPKTLLQEHLQARKLSLPGYTVVDTKGQAHNQTFTVECIVDGMDSIISVGSSRRKAEQKAAEKALKILKNEP</sequence>
<reference key="1">
    <citation type="journal article" date="2005" name="Genome Res.">
        <title>Coping with cold: the genome of the versatile marine Antarctica bacterium Pseudoalteromonas haloplanktis TAC125.</title>
        <authorList>
            <person name="Medigue C."/>
            <person name="Krin E."/>
            <person name="Pascal G."/>
            <person name="Barbe V."/>
            <person name="Bernsel A."/>
            <person name="Bertin P.N."/>
            <person name="Cheung F."/>
            <person name="Cruveiller S."/>
            <person name="D'Amico S."/>
            <person name="Duilio A."/>
            <person name="Fang G."/>
            <person name="Feller G."/>
            <person name="Ho C."/>
            <person name="Mangenot S."/>
            <person name="Marino G."/>
            <person name="Nilsson J."/>
            <person name="Parrilli E."/>
            <person name="Rocha E.P.C."/>
            <person name="Rouy Z."/>
            <person name="Sekowska A."/>
            <person name="Tutino M.L."/>
            <person name="Vallenet D."/>
            <person name="von Heijne G."/>
            <person name="Danchin A."/>
        </authorList>
    </citation>
    <scope>NUCLEOTIDE SEQUENCE [LARGE SCALE GENOMIC DNA]</scope>
    <source>
        <strain>TAC 125</strain>
    </source>
</reference>
<dbReference type="EC" id="3.1.26.3" evidence="1"/>
<dbReference type="EMBL" id="CR954246">
    <property type="protein sequence ID" value="CAI85815.1"/>
    <property type="status" value="ALT_INIT"/>
    <property type="molecule type" value="Genomic_DNA"/>
</dbReference>
<dbReference type="SMR" id="Q3IDL2"/>
<dbReference type="STRING" id="326442.PSHAa0732"/>
<dbReference type="KEGG" id="pha:PSHAa0732"/>
<dbReference type="eggNOG" id="COG0571">
    <property type="taxonomic scope" value="Bacteria"/>
</dbReference>
<dbReference type="HOGENOM" id="CLU_000907_1_1_6"/>
<dbReference type="BioCyc" id="PHAL326442:PSHA_RS03575-MONOMER"/>
<dbReference type="Proteomes" id="UP000006843">
    <property type="component" value="Chromosome I"/>
</dbReference>
<dbReference type="GO" id="GO:0005737">
    <property type="term" value="C:cytoplasm"/>
    <property type="evidence" value="ECO:0007669"/>
    <property type="project" value="UniProtKB-SubCell"/>
</dbReference>
<dbReference type="GO" id="GO:0003725">
    <property type="term" value="F:double-stranded RNA binding"/>
    <property type="evidence" value="ECO:0007669"/>
    <property type="project" value="TreeGrafter"/>
</dbReference>
<dbReference type="GO" id="GO:0046872">
    <property type="term" value="F:metal ion binding"/>
    <property type="evidence" value="ECO:0007669"/>
    <property type="project" value="UniProtKB-KW"/>
</dbReference>
<dbReference type="GO" id="GO:0004525">
    <property type="term" value="F:ribonuclease III activity"/>
    <property type="evidence" value="ECO:0007669"/>
    <property type="project" value="UniProtKB-UniRule"/>
</dbReference>
<dbReference type="GO" id="GO:0019843">
    <property type="term" value="F:rRNA binding"/>
    <property type="evidence" value="ECO:0007669"/>
    <property type="project" value="UniProtKB-KW"/>
</dbReference>
<dbReference type="GO" id="GO:0006397">
    <property type="term" value="P:mRNA processing"/>
    <property type="evidence" value="ECO:0007669"/>
    <property type="project" value="UniProtKB-UniRule"/>
</dbReference>
<dbReference type="GO" id="GO:0010468">
    <property type="term" value="P:regulation of gene expression"/>
    <property type="evidence" value="ECO:0007669"/>
    <property type="project" value="TreeGrafter"/>
</dbReference>
<dbReference type="GO" id="GO:0006364">
    <property type="term" value="P:rRNA processing"/>
    <property type="evidence" value="ECO:0007669"/>
    <property type="project" value="UniProtKB-UniRule"/>
</dbReference>
<dbReference type="GO" id="GO:0008033">
    <property type="term" value="P:tRNA processing"/>
    <property type="evidence" value="ECO:0007669"/>
    <property type="project" value="UniProtKB-KW"/>
</dbReference>
<dbReference type="CDD" id="cd10845">
    <property type="entry name" value="DSRM_RNAse_III_family"/>
    <property type="match status" value="1"/>
</dbReference>
<dbReference type="CDD" id="cd00593">
    <property type="entry name" value="RIBOc"/>
    <property type="match status" value="1"/>
</dbReference>
<dbReference type="FunFam" id="1.10.1520.10:FF:000001">
    <property type="entry name" value="Ribonuclease 3"/>
    <property type="match status" value="1"/>
</dbReference>
<dbReference type="FunFam" id="3.30.160.20:FF:000003">
    <property type="entry name" value="Ribonuclease 3"/>
    <property type="match status" value="1"/>
</dbReference>
<dbReference type="Gene3D" id="3.30.160.20">
    <property type="match status" value="1"/>
</dbReference>
<dbReference type="Gene3D" id="1.10.1520.10">
    <property type="entry name" value="Ribonuclease III domain"/>
    <property type="match status" value="1"/>
</dbReference>
<dbReference type="HAMAP" id="MF_00104">
    <property type="entry name" value="RNase_III"/>
    <property type="match status" value="1"/>
</dbReference>
<dbReference type="InterPro" id="IPR014720">
    <property type="entry name" value="dsRBD_dom"/>
</dbReference>
<dbReference type="InterPro" id="IPR011907">
    <property type="entry name" value="RNase_III"/>
</dbReference>
<dbReference type="InterPro" id="IPR000999">
    <property type="entry name" value="RNase_III_dom"/>
</dbReference>
<dbReference type="InterPro" id="IPR036389">
    <property type="entry name" value="RNase_III_sf"/>
</dbReference>
<dbReference type="NCBIfam" id="TIGR02191">
    <property type="entry name" value="RNaseIII"/>
    <property type="match status" value="1"/>
</dbReference>
<dbReference type="PANTHER" id="PTHR11207:SF0">
    <property type="entry name" value="RIBONUCLEASE 3"/>
    <property type="match status" value="1"/>
</dbReference>
<dbReference type="PANTHER" id="PTHR11207">
    <property type="entry name" value="RIBONUCLEASE III"/>
    <property type="match status" value="1"/>
</dbReference>
<dbReference type="Pfam" id="PF00035">
    <property type="entry name" value="dsrm"/>
    <property type="match status" value="1"/>
</dbReference>
<dbReference type="Pfam" id="PF14622">
    <property type="entry name" value="Ribonucleas_3_3"/>
    <property type="match status" value="1"/>
</dbReference>
<dbReference type="SMART" id="SM00358">
    <property type="entry name" value="DSRM"/>
    <property type="match status" value="1"/>
</dbReference>
<dbReference type="SMART" id="SM00535">
    <property type="entry name" value="RIBOc"/>
    <property type="match status" value="1"/>
</dbReference>
<dbReference type="SUPFAM" id="SSF54768">
    <property type="entry name" value="dsRNA-binding domain-like"/>
    <property type="match status" value="1"/>
</dbReference>
<dbReference type="SUPFAM" id="SSF69065">
    <property type="entry name" value="RNase III domain-like"/>
    <property type="match status" value="1"/>
</dbReference>
<dbReference type="PROSITE" id="PS50137">
    <property type="entry name" value="DS_RBD"/>
    <property type="match status" value="1"/>
</dbReference>
<dbReference type="PROSITE" id="PS00517">
    <property type="entry name" value="RNASE_3_1"/>
    <property type="match status" value="1"/>
</dbReference>
<dbReference type="PROSITE" id="PS50142">
    <property type="entry name" value="RNASE_3_2"/>
    <property type="match status" value="1"/>
</dbReference>
<comment type="function">
    <text evidence="1">Digests double-stranded RNA. Involved in the processing of primary rRNA transcript to yield the immediate precursors to the large and small rRNAs (23S and 16S). Processes some mRNAs, and tRNAs when they are encoded in the rRNA operon. Processes pre-crRNA and tracrRNA of type II CRISPR loci if present in the organism.</text>
</comment>
<comment type="catalytic activity">
    <reaction evidence="1">
        <text>Endonucleolytic cleavage to 5'-phosphomonoester.</text>
        <dbReference type="EC" id="3.1.26.3"/>
    </reaction>
</comment>
<comment type="cofactor">
    <cofactor evidence="1">
        <name>Mg(2+)</name>
        <dbReference type="ChEBI" id="CHEBI:18420"/>
    </cofactor>
</comment>
<comment type="subunit">
    <text evidence="1">Homodimer.</text>
</comment>
<comment type="subcellular location">
    <subcellularLocation>
        <location evidence="1">Cytoplasm</location>
    </subcellularLocation>
</comment>
<comment type="similarity">
    <text evidence="1">Belongs to the ribonuclease III family.</text>
</comment>
<comment type="sequence caution" evidence="2">
    <conflict type="erroneous initiation">
        <sequence resource="EMBL-CDS" id="CAI85815"/>
    </conflict>
    <text>Truncated N-terminus.</text>
</comment>
<gene>
    <name evidence="1" type="primary">rnc</name>
    <name type="ordered locus">PSHAa0732</name>
</gene>
<evidence type="ECO:0000255" key="1">
    <source>
        <dbReference type="HAMAP-Rule" id="MF_00104"/>
    </source>
</evidence>
<evidence type="ECO:0000305" key="2"/>
<keyword id="KW-0963">Cytoplasm</keyword>
<keyword id="KW-0255">Endonuclease</keyword>
<keyword id="KW-0378">Hydrolase</keyword>
<keyword id="KW-0460">Magnesium</keyword>
<keyword id="KW-0479">Metal-binding</keyword>
<keyword id="KW-0507">mRNA processing</keyword>
<keyword id="KW-0540">Nuclease</keyword>
<keyword id="KW-1185">Reference proteome</keyword>
<keyword id="KW-0694">RNA-binding</keyword>
<keyword id="KW-0698">rRNA processing</keyword>
<keyword id="KW-0699">rRNA-binding</keyword>
<keyword id="KW-0819">tRNA processing</keyword>
<name>RNC_PSET1</name>
<organism>
    <name type="scientific">Pseudoalteromonas translucida (strain TAC 125)</name>
    <dbReference type="NCBI Taxonomy" id="326442"/>
    <lineage>
        <taxon>Bacteria</taxon>
        <taxon>Pseudomonadati</taxon>
        <taxon>Pseudomonadota</taxon>
        <taxon>Gammaproteobacteria</taxon>
        <taxon>Alteromonadales</taxon>
        <taxon>Pseudoalteromonadaceae</taxon>
        <taxon>Pseudoalteromonas</taxon>
    </lineage>
</organism>
<accession>Q3IDL2</accession>
<protein>
    <recommendedName>
        <fullName evidence="1">Ribonuclease 3</fullName>
        <ecNumber evidence="1">3.1.26.3</ecNumber>
    </recommendedName>
    <alternativeName>
        <fullName evidence="1">Ribonuclease III</fullName>
        <shortName evidence="1">RNase III</shortName>
    </alternativeName>
</protein>